<reference key="1">
    <citation type="journal article" date="2008" name="J. Bacteriol.">
        <title>The complete genome sequence of Escherichia coli DH10B: insights into the biology of a laboratory workhorse.</title>
        <authorList>
            <person name="Durfee T."/>
            <person name="Nelson R."/>
            <person name="Baldwin S."/>
            <person name="Plunkett G. III"/>
            <person name="Burland V."/>
            <person name="Mau B."/>
            <person name="Petrosino J.F."/>
            <person name="Qin X."/>
            <person name="Muzny D.M."/>
            <person name="Ayele M."/>
            <person name="Gibbs R.A."/>
            <person name="Csorgo B."/>
            <person name="Posfai G."/>
            <person name="Weinstock G.M."/>
            <person name="Blattner F.R."/>
        </authorList>
    </citation>
    <scope>NUCLEOTIDE SEQUENCE [LARGE SCALE GENOMIC DNA]</scope>
    <source>
        <strain>K12 / DH10B</strain>
    </source>
</reference>
<proteinExistence type="inferred from homology"/>
<feature type="chain" id="PRO_1000146755" description="Protein AaeX">
    <location>
        <begin position="1"/>
        <end position="67"/>
    </location>
</feature>
<feature type="transmembrane region" description="Helical" evidence="1">
    <location>
        <begin position="3"/>
        <end position="23"/>
    </location>
</feature>
<feature type="transmembrane region" description="Helical" evidence="1">
    <location>
        <begin position="43"/>
        <end position="63"/>
    </location>
</feature>
<name>AAEX_ECODH</name>
<keyword id="KW-1003">Cell membrane</keyword>
<keyword id="KW-0472">Membrane</keyword>
<keyword id="KW-0812">Transmembrane</keyword>
<keyword id="KW-1133">Transmembrane helix</keyword>
<sequence length="67" mass="7847">MSLFPVIVVFGLSFPPIFFELLLSLAIFWLVRRVLVPTGIYDFVWHPALFNTALYCCLFYLISRLFV</sequence>
<accession>B1XHL4</accession>
<gene>
    <name evidence="1" type="primary">aaeX</name>
    <name type="ordered locus">ECDH10B_3419</name>
</gene>
<evidence type="ECO:0000255" key="1">
    <source>
        <dbReference type="HAMAP-Rule" id="MF_01546"/>
    </source>
</evidence>
<protein>
    <recommendedName>
        <fullName evidence="1">Protein AaeX</fullName>
    </recommendedName>
</protein>
<dbReference type="EMBL" id="CP000948">
    <property type="protein sequence ID" value="ACB04315.1"/>
    <property type="molecule type" value="Genomic_DNA"/>
</dbReference>
<dbReference type="RefSeq" id="WP_000051841.1">
    <property type="nucleotide sequence ID" value="NC_010473.1"/>
</dbReference>
<dbReference type="GeneID" id="93778743"/>
<dbReference type="KEGG" id="ecd:ECDH10B_3419"/>
<dbReference type="HOGENOM" id="CLU_188292_0_0_6"/>
<dbReference type="GO" id="GO:0005886">
    <property type="term" value="C:plasma membrane"/>
    <property type="evidence" value="ECO:0007669"/>
    <property type="project" value="UniProtKB-SubCell"/>
</dbReference>
<dbReference type="HAMAP" id="MF_01546">
    <property type="entry name" value="AaeX"/>
    <property type="match status" value="1"/>
</dbReference>
<dbReference type="InterPro" id="IPR012451">
    <property type="entry name" value="DUF1656"/>
</dbReference>
<dbReference type="NCBIfam" id="NF008615">
    <property type="entry name" value="PRK11594.1"/>
    <property type="match status" value="1"/>
</dbReference>
<dbReference type="Pfam" id="PF07869">
    <property type="entry name" value="DUF1656"/>
    <property type="match status" value="1"/>
</dbReference>
<comment type="subcellular location">
    <subcellularLocation>
        <location evidence="1">Cell membrane</location>
        <topology evidence="1">Multi-pass membrane protein</topology>
    </subcellularLocation>
</comment>
<comment type="induction">
    <text evidence="1">Positively coregulated with aaeA and aaeB by AaeR.</text>
</comment>
<comment type="similarity">
    <text evidence="1">Belongs to the AaeX family.</text>
</comment>
<organism>
    <name type="scientific">Escherichia coli (strain K12 / DH10B)</name>
    <dbReference type="NCBI Taxonomy" id="316385"/>
    <lineage>
        <taxon>Bacteria</taxon>
        <taxon>Pseudomonadati</taxon>
        <taxon>Pseudomonadota</taxon>
        <taxon>Gammaproteobacteria</taxon>
        <taxon>Enterobacterales</taxon>
        <taxon>Enterobacteriaceae</taxon>
        <taxon>Escherichia</taxon>
    </lineage>
</organism>